<name>SEC11_FUSV7</name>
<evidence type="ECO:0000250" key="1">
    <source>
        <dbReference type="UniProtKB" id="P15367"/>
    </source>
</evidence>
<evidence type="ECO:0000250" key="2">
    <source>
        <dbReference type="UniProtKB" id="P67812"/>
    </source>
</evidence>
<evidence type="ECO:0000255" key="3"/>
<evidence type="ECO:0000305" key="4"/>
<sequence>MLSSLGNPRQAAAQLMNFALILSTAFMMWKGLSVITDSPSPIVVVLSGSMEPAFQRGDLLFLWNRNLLRETEVGEVVVYNVKDKDIPIVHRVVRKFGNGDTAELLTKGDNNLSDDTELYAKGQDYLERKDIIGSVVAYMPFVGYVTILLSEHPWLKTVMLGIMGLLVVLQRE</sequence>
<gene>
    <name type="primary">SEC11</name>
    <name type="ORF">NECHADRAFT_94096</name>
</gene>
<dbReference type="EC" id="3.4.21.89" evidence="1"/>
<dbReference type="EMBL" id="GG698928">
    <property type="protein sequence ID" value="EEU36511.1"/>
    <property type="molecule type" value="Genomic_DNA"/>
</dbReference>
<dbReference type="RefSeq" id="XP_003042224.1">
    <property type="nucleotide sequence ID" value="XM_003042178.1"/>
</dbReference>
<dbReference type="SMR" id="C7ZHK5"/>
<dbReference type="FunCoup" id="C7ZHK5">
    <property type="interactions" value="686"/>
</dbReference>
<dbReference type="STRING" id="660122.C7ZHK5"/>
<dbReference type="MEROPS" id="S26.010"/>
<dbReference type="GlyCosmos" id="C7ZHK5">
    <property type="glycosylation" value="1 site, No reported glycans"/>
</dbReference>
<dbReference type="EnsemblFungi" id="NechaT94096">
    <property type="protein sequence ID" value="NechaP94096"/>
    <property type="gene ID" value="NechaG94096"/>
</dbReference>
<dbReference type="GeneID" id="9669086"/>
<dbReference type="KEGG" id="nhe:NECHADRAFT_94096"/>
<dbReference type="VEuPathDB" id="FungiDB:NECHADRAFT_94096"/>
<dbReference type="eggNOG" id="KOG3342">
    <property type="taxonomic scope" value="Eukaryota"/>
</dbReference>
<dbReference type="HOGENOM" id="CLU_089996_0_0_1"/>
<dbReference type="InParanoid" id="C7ZHK5"/>
<dbReference type="OMA" id="ILMNEYP"/>
<dbReference type="OrthoDB" id="10257561at2759"/>
<dbReference type="Proteomes" id="UP000005206">
    <property type="component" value="Unassembled WGS sequence"/>
</dbReference>
<dbReference type="GO" id="GO:0005787">
    <property type="term" value="C:signal peptidase complex"/>
    <property type="evidence" value="ECO:0007669"/>
    <property type="project" value="EnsemblFungi"/>
</dbReference>
<dbReference type="GO" id="GO:0004252">
    <property type="term" value="F:serine-type endopeptidase activity"/>
    <property type="evidence" value="ECO:0007669"/>
    <property type="project" value="UniProtKB-EC"/>
</dbReference>
<dbReference type="GO" id="GO:0045047">
    <property type="term" value="P:protein targeting to ER"/>
    <property type="evidence" value="ECO:0007669"/>
    <property type="project" value="EnsemblFungi"/>
</dbReference>
<dbReference type="GO" id="GO:0006465">
    <property type="term" value="P:signal peptide processing"/>
    <property type="evidence" value="ECO:0007669"/>
    <property type="project" value="EnsemblFungi"/>
</dbReference>
<dbReference type="CDD" id="cd06530">
    <property type="entry name" value="S26_SPase_I"/>
    <property type="match status" value="1"/>
</dbReference>
<dbReference type="Gene3D" id="2.10.109.10">
    <property type="entry name" value="Umud Fragment, subunit A"/>
    <property type="match status" value="1"/>
</dbReference>
<dbReference type="InterPro" id="IPR036286">
    <property type="entry name" value="LexA/Signal_pep-like_sf"/>
</dbReference>
<dbReference type="InterPro" id="IPR019756">
    <property type="entry name" value="Pept_S26A_signal_pept_1_Ser-AS"/>
</dbReference>
<dbReference type="InterPro" id="IPR019533">
    <property type="entry name" value="Peptidase_S26"/>
</dbReference>
<dbReference type="InterPro" id="IPR001733">
    <property type="entry name" value="Peptidase_S26B"/>
</dbReference>
<dbReference type="NCBIfam" id="TIGR02228">
    <property type="entry name" value="sigpep_I_arch"/>
    <property type="match status" value="1"/>
</dbReference>
<dbReference type="PANTHER" id="PTHR10806">
    <property type="entry name" value="SIGNAL PEPTIDASE COMPLEX CATALYTIC SUBUNIT SEC11"/>
    <property type="match status" value="1"/>
</dbReference>
<dbReference type="PANTHER" id="PTHR10806:SF6">
    <property type="entry name" value="SIGNAL PEPTIDASE COMPLEX CATALYTIC SUBUNIT SEC11"/>
    <property type="match status" value="1"/>
</dbReference>
<dbReference type="PRINTS" id="PR00728">
    <property type="entry name" value="SIGNALPTASE"/>
</dbReference>
<dbReference type="SUPFAM" id="SSF51306">
    <property type="entry name" value="LexA/Signal peptidase"/>
    <property type="match status" value="1"/>
</dbReference>
<dbReference type="PROSITE" id="PS00501">
    <property type="entry name" value="SPASE_I_1"/>
    <property type="match status" value="1"/>
</dbReference>
<organism>
    <name type="scientific">Fusarium vanettenii (strain ATCC MYA-4622 / CBS 123669 / FGSC 9596 / NRRL 45880 / 77-13-4)</name>
    <name type="common">Fusarium solani subsp. pisi</name>
    <dbReference type="NCBI Taxonomy" id="660122"/>
    <lineage>
        <taxon>Eukaryota</taxon>
        <taxon>Fungi</taxon>
        <taxon>Dikarya</taxon>
        <taxon>Ascomycota</taxon>
        <taxon>Pezizomycotina</taxon>
        <taxon>Sordariomycetes</taxon>
        <taxon>Hypocreomycetidae</taxon>
        <taxon>Hypocreales</taxon>
        <taxon>Nectriaceae</taxon>
        <taxon>Fusarium</taxon>
        <taxon>Fusarium solani species complex</taxon>
        <taxon>Fusarium vanettenii</taxon>
    </lineage>
</organism>
<feature type="chain" id="PRO_0000412340" description="Signal peptidase complex catalytic subunit SEC11">
    <location>
        <begin position="1"/>
        <end position="172"/>
    </location>
</feature>
<feature type="topological domain" description="Cytoplasmic" evidence="4">
    <location>
        <begin position="1"/>
        <end position="14"/>
    </location>
</feature>
<feature type="transmembrane region" description="Helical; Signal-anchor for type II membrane protein" evidence="3">
    <location>
        <begin position="15"/>
        <end position="35"/>
    </location>
</feature>
<feature type="topological domain" description="Lumenal" evidence="4">
    <location>
        <begin position="36"/>
        <end position="172"/>
    </location>
</feature>
<feature type="region of interest" description="C-terminal short (CTS) helix" evidence="2">
    <location>
        <begin position="158"/>
        <end position="169"/>
    </location>
</feature>
<feature type="active site" description="Charge relay system" evidence="1">
    <location>
        <position position="49"/>
    </location>
</feature>
<feature type="active site" description="Charge relay system" evidence="1">
    <location>
        <position position="90"/>
    </location>
</feature>
<feature type="active site" description="Charge relay system" evidence="1">
    <location>
        <position position="115"/>
    </location>
</feature>
<feature type="glycosylation site" description="N-linked (GlcNAc...) asparagine" evidence="3">
    <location>
        <position position="111"/>
    </location>
</feature>
<reference key="1">
    <citation type="journal article" date="2009" name="PLoS Genet.">
        <title>The genome of Nectria haematococca: contribution of supernumerary chromosomes to gene expansion.</title>
        <authorList>
            <person name="Coleman J.J."/>
            <person name="Rounsley S.D."/>
            <person name="Rodriguez-Carres M."/>
            <person name="Kuo A."/>
            <person name="Wasmann C.C."/>
            <person name="Grimwood J."/>
            <person name="Schmutz J."/>
            <person name="Taga M."/>
            <person name="White G.J."/>
            <person name="Zhou S."/>
            <person name="Schwartz D.C."/>
            <person name="Freitag M."/>
            <person name="Ma L.-J."/>
            <person name="Danchin E.G.J."/>
            <person name="Henrissat B."/>
            <person name="Coutinho P.M."/>
            <person name="Nelson D.R."/>
            <person name="Straney D."/>
            <person name="Napoli C.A."/>
            <person name="Barker B.M."/>
            <person name="Gribskov M."/>
            <person name="Rep M."/>
            <person name="Kroken S."/>
            <person name="Molnar I."/>
            <person name="Rensing C."/>
            <person name="Kennell J.C."/>
            <person name="Zamora J."/>
            <person name="Farman M.L."/>
            <person name="Selker E.U."/>
            <person name="Salamov A."/>
            <person name="Shapiro H."/>
            <person name="Pangilinan J."/>
            <person name="Lindquist E."/>
            <person name="Lamers C."/>
            <person name="Grigoriev I.V."/>
            <person name="Geiser D.M."/>
            <person name="Covert S.F."/>
            <person name="Temporini E."/>
            <person name="VanEtten H.D."/>
        </authorList>
    </citation>
    <scope>NUCLEOTIDE SEQUENCE [LARGE SCALE GENOMIC DNA]</scope>
    <source>
        <strain>ATCC MYA-4622 / CBS 123669 / FGSC 9596 / NRRL 45880 / 77-13-4</strain>
    </source>
</reference>
<comment type="function">
    <text evidence="1 2">Catalytic component of the signal peptidase complex (SPC) which catalyzes the cleavage of N-terminal signal sequences from nascent proteins as they are translocated into the lumen of the endoplasmic reticulum (By similarity). Specifically cleaves N-terminal signal peptides that contain a hydrophobic alpha-helix (h-region) shorter than 18-20 amino acids (By similarity).</text>
</comment>
<comment type="catalytic activity">
    <reaction evidence="1">
        <text>Cleavage of hydrophobic, N-terminal signal or leader sequences from secreted and periplasmic proteins.</text>
        <dbReference type="EC" id="3.4.21.89"/>
    </reaction>
</comment>
<comment type="subunit">
    <text evidence="1 2">Component of the signal peptidase complex (SPC) composed of a catalytic subunit SEC11 and three accessory subunits SPC1, SPC2 and SPC3 (By similarity). The complex induces a local thinning of the ER membrane which is used to measure the length of the signal peptide (SP) h-region of protein substrates. This ensures the selectivity of the complex towards h-regions shorter than 18-20 amino acids (By similarity). SPC associates with the translocon complex (By similarity).</text>
</comment>
<comment type="subcellular location">
    <subcellularLocation>
        <location evidence="1">Endoplasmic reticulum membrane</location>
        <topology evidence="1">Single-pass type II membrane protein</topology>
    </subcellularLocation>
</comment>
<comment type="domain">
    <text evidence="2">The C-terminal short (CTS) helix is essential for catalytic activity. It may be accommodated as a transmembrane helix in the thinned membrane environment of the complex, similarly to the signal peptide in the complex substrates.</text>
</comment>
<comment type="similarity">
    <text evidence="4">Belongs to the peptidase S26B family.</text>
</comment>
<protein>
    <recommendedName>
        <fullName>Signal peptidase complex catalytic subunit SEC11</fullName>
        <ecNumber evidence="1">3.4.21.89</ecNumber>
    </recommendedName>
    <alternativeName>
        <fullName>Signal peptidase I</fullName>
    </alternativeName>
</protein>
<proteinExistence type="inferred from homology"/>
<keyword id="KW-0256">Endoplasmic reticulum</keyword>
<keyword id="KW-0325">Glycoprotein</keyword>
<keyword id="KW-0378">Hydrolase</keyword>
<keyword id="KW-0472">Membrane</keyword>
<keyword id="KW-0645">Protease</keyword>
<keyword id="KW-1185">Reference proteome</keyword>
<keyword id="KW-0735">Signal-anchor</keyword>
<keyword id="KW-0812">Transmembrane</keyword>
<keyword id="KW-1133">Transmembrane helix</keyword>
<accession>C7ZHK5</accession>